<proteinExistence type="inferred from homology"/>
<keyword id="KW-0456">Lyase</keyword>
<keyword id="KW-0614">Plasmid</keyword>
<keyword id="KW-1185">Reference proteome</keyword>
<protein>
    <recommendedName>
        <fullName evidence="1">Probable 5-dehydro-4-deoxyglucarate dehydratase</fullName>
        <ecNumber evidence="1">4.2.1.41</ecNumber>
    </recommendedName>
    <alternativeName>
        <fullName evidence="1">5-keto-4-deoxy-glucarate dehydratase</fullName>
        <shortName evidence="1">KDGDH</shortName>
    </alternativeName>
</protein>
<dbReference type="EC" id="4.2.1.41" evidence="1"/>
<dbReference type="EMBL" id="AL646053">
    <property type="protein sequence ID" value="CAD17977.1"/>
    <property type="molecule type" value="Genomic_DNA"/>
</dbReference>
<dbReference type="RefSeq" id="WP_011004124.1">
    <property type="nucleotide sequence ID" value="NC_003296.1"/>
</dbReference>
<dbReference type="SMR" id="Q8XRK5"/>
<dbReference type="STRING" id="267608.RSp0826"/>
<dbReference type="EnsemblBacteria" id="CAD17977">
    <property type="protein sequence ID" value="CAD17977"/>
    <property type="gene ID" value="RSp0826"/>
</dbReference>
<dbReference type="KEGG" id="rso:RSp0826"/>
<dbReference type="PATRIC" id="fig|267608.8.peg.4296"/>
<dbReference type="eggNOG" id="COG0329">
    <property type="taxonomic scope" value="Bacteria"/>
</dbReference>
<dbReference type="HOGENOM" id="CLU_049343_5_2_4"/>
<dbReference type="UniPathway" id="UPA00564">
    <property type="reaction ID" value="UER00628"/>
</dbReference>
<dbReference type="Proteomes" id="UP000001436">
    <property type="component" value="Plasmid megaplasmid Rsp"/>
</dbReference>
<dbReference type="GO" id="GO:0008840">
    <property type="term" value="F:4-hydroxy-tetrahydrodipicolinate synthase activity"/>
    <property type="evidence" value="ECO:0007669"/>
    <property type="project" value="TreeGrafter"/>
</dbReference>
<dbReference type="GO" id="GO:0047448">
    <property type="term" value="F:5-dehydro-4-deoxyglucarate dehydratase activity"/>
    <property type="evidence" value="ECO:0007669"/>
    <property type="project" value="UniProtKB-UniRule"/>
</dbReference>
<dbReference type="GO" id="GO:0042838">
    <property type="term" value="P:D-glucarate catabolic process"/>
    <property type="evidence" value="ECO:0007669"/>
    <property type="project" value="UniProtKB-UniRule"/>
</dbReference>
<dbReference type="CDD" id="cd00951">
    <property type="entry name" value="KDGDH"/>
    <property type="match status" value="1"/>
</dbReference>
<dbReference type="Gene3D" id="3.20.20.70">
    <property type="entry name" value="Aldolase class I"/>
    <property type="match status" value="1"/>
</dbReference>
<dbReference type="HAMAP" id="MF_00694">
    <property type="entry name" value="KDGDH"/>
    <property type="match status" value="1"/>
</dbReference>
<dbReference type="InterPro" id="IPR013785">
    <property type="entry name" value="Aldolase_TIM"/>
</dbReference>
<dbReference type="InterPro" id="IPR002220">
    <property type="entry name" value="DapA-like"/>
</dbReference>
<dbReference type="InterPro" id="IPR017655">
    <property type="entry name" value="Dehydro-deoxyglucarate_dehyd"/>
</dbReference>
<dbReference type="NCBIfam" id="TIGR03249">
    <property type="entry name" value="KdgD"/>
    <property type="match status" value="1"/>
</dbReference>
<dbReference type="NCBIfam" id="NF002958">
    <property type="entry name" value="PRK03620.1"/>
    <property type="match status" value="1"/>
</dbReference>
<dbReference type="PANTHER" id="PTHR12128:SF19">
    <property type="entry name" value="5-DEHYDRO-4-DEOXYGLUCARATE DEHYDRATASE 2-RELATED"/>
    <property type="match status" value="1"/>
</dbReference>
<dbReference type="PANTHER" id="PTHR12128">
    <property type="entry name" value="DIHYDRODIPICOLINATE SYNTHASE"/>
    <property type="match status" value="1"/>
</dbReference>
<dbReference type="Pfam" id="PF00701">
    <property type="entry name" value="DHDPS"/>
    <property type="match status" value="1"/>
</dbReference>
<dbReference type="PIRSF" id="PIRSF001365">
    <property type="entry name" value="DHDPS"/>
    <property type="match status" value="1"/>
</dbReference>
<dbReference type="SMART" id="SM01130">
    <property type="entry name" value="DHDPS"/>
    <property type="match status" value="1"/>
</dbReference>
<dbReference type="SUPFAM" id="SSF51569">
    <property type="entry name" value="Aldolase"/>
    <property type="match status" value="1"/>
</dbReference>
<sequence length="311" mass="33446">MSRYTPSEFAHQIGTGLLSFPVTHFKSDLSFDEAAYRANLSWLFSHEAAGLFAAGGTGEFFSLTPAETDRVVRAAVAETGGRLPVIAPAGYGTAMAKEYCQAAEAAGADGILLLPPYLTEASADGVAAHVEQVCKSTRLGVIVYNRANQVLDENHLERLAERCPNLVGFKDGVGDLELMTRIYSRLGERFTYIGGLPTAETFAMPYLTMGVTTYSSAIFNFVPKFALDFYAAVRAADHAKAYAMLNDFVLPYIALRNRKRGYAVSIVKAGMKVIGRSAGPVRAPLTDLTEAELAELSALVARIADVQKLAA</sequence>
<name>KDGD_RALN1</name>
<evidence type="ECO:0000255" key="1">
    <source>
        <dbReference type="HAMAP-Rule" id="MF_00694"/>
    </source>
</evidence>
<organism>
    <name type="scientific">Ralstonia nicotianae (strain ATCC BAA-1114 / GMI1000)</name>
    <name type="common">Ralstonia solanacearum</name>
    <dbReference type="NCBI Taxonomy" id="267608"/>
    <lineage>
        <taxon>Bacteria</taxon>
        <taxon>Pseudomonadati</taxon>
        <taxon>Pseudomonadota</taxon>
        <taxon>Betaproteobacteria</taxon>
        <taxon>Burkholderiales</taxon>
        <taxon>Burkholderiaceae</taxon>
        <taxon>Ralstonia</taxon>
        <taxon>Ralstonia solanacearum species complex</taxon>
    </lineage>
</organism>
<reference key="1">
    <citation type="journal article" date="2002" name="Nature">
        <title>Genome sequence of the plant pathogen Ralstonia solanacearum.</title>
        <authorList>
            <person name="Salanoubat M."/>
            <person name="Genin S."/>
            <person name="Artiguenave F."/>
            <person name="Gouzy J."/>
            <person name="Mangenot S."/>
            <person name="Arlat M."/>
            <person name="Billault A."/>
            <person name="Brottier P."/>
            <person name="Camus J.-C."/>
            <person name="Cattolico L."/>
            <person name="Chandler M."/>
            <person name="Choisne N."/>
            <person name="Claudel-Renard C."/>
            <person name="Cunnac S."/>
            <person name="Demange N."/>
            <person name="Gaspin C."/>
            <person name="Lavie M."/>
            <person name="Moisan A."/>
            <person name="Robert C."/>
            <person name="Saurin W."/>
            <person name="Schiex T."/>
            <person name="Siguier P."/>
            <person name="Thebault P."/>
            <person name="Whalen M."/>
            <person name="Wincker P."/>
            <person name="Levy M."/>
            <person name="Weissenbach J."/>
            <person name="Boucher C.A."/>
        </authorList>
    </citation>
    <scope>NUCLEOTIDE SEQUENCE [LARGE SCALE GENOMIC DNA]</scope>
    <source>
        <strain>ATCC BAA-1114 / GMI1000</strain>
    </source>
</reference>
<gene>
    <name type="ordered locus">RSp0826</name>
    <name type="ORF">RS05369</name>
</gene>
<geneLocation type="plasmid">
    <name>megaplasmid Rsp</name>
</geneLocation>
<comment type="catalytic activity">
    <reaction evidence="1">
        <text>5-dehydro-4-deoxy-D-glucarate + H(+) = 2,5-dioxopentanoate + CO2 + H2O</text>
        <dbReference type="Rhea" id="RHEA:24608"/>
        <dbReference type="ChEBI" id="CHEBI:15377"/>
        <dbReference type="ChEBI" id="CHEBI:15378"/>
        <dbReference type="ChEBI" id="CHEBI:16526"/>
        <dbReference type="ChEBI" id="CHEBI:42819"/>
        <dbReference type="ChEBI" id="CHEBI:58136"/>
        <dbReference type="EC" id="4.2.1.41"/>
    </reaction>
</comment>
<comment type="pathway">
    <text evidence="1">Carbohydrate acid metabolism; D-glucarate degradation; 2,5-dioxopentanoate from D-glucarate: step 2/2.</text>
</comment>
<comment type="similarity">
    <text evidence="1">Belongs to the DapA family.</text>
</comment>
<accession>Q8XRK5</accession>
<feature type="chain" id="PRO_0000103237" description="Probable 5-dehydro-4-deoxyglucarate dehydratase">
    <location>
        <begin position="1"/>
        <end position="311"/>
    </location>
</feature>